<organism>
    <name type="scientific">Aspergillus fumigatus (strain ATCC MYA-4609 / CBS 101355 / FGSC A1100 / Af293)</name>
    <name type="common">Neosartorya fumigata</name>
    <dbReference type="NCBI Taxonomy" id="330879"/>
    <lineage>
        <taxon>Eukaryota</taxon>
        <taxon>Fungi</taxon>
        <taxon>Dikarya</taxon>
        <taxon>Ascomycota</taxon>
        <taxon>Pezizomycotina</taxon>
        <taxon>Eurotiomycetes</taxon>
        <taxon>Eurotiomycetidae</taxon>
        <taxon>Eurotiales</taxon>
        <taxon>Aspergillaceae</taxon>
        <taxon>Aspergillus</taxon>
        <taxon>Aspergillus subgen. Fumigati</taxon>
    </lineage>
</organism>
<dbReference type="EMBL" id="AAHF01000008">
    <property type="protein sequence ID" value="EBA27314.1"/>
    <property type="molecule type" value="Genomic_DNA"/>
</dbReference>
<dbReference type="RefSeq" id="XP_001481652.1">
    <property type="nucleotide sequence ID" value="XM_001481602.1"/>
</dbReference>
<dbReference type="SMR" id="A4D9U3"/>
<dbReference type="FunCoup" id="A4D9U3">
    <property type="interactions" value="278"/>
</dbReference>
<dbReference type="STRING" id="330879.A4D9U3"/>
<dbReference type="EnsemblFungi" id="EBA27314">
    <property type="protein sequence ID" value="EBA27314"/>
    <property type="gene ID" value="AFUA_2G04262"/>
</dbReference>
<dbReference type="GeneID" id="5076965"/>
<dbReference type="KEGG" id="afm:AFUA_2G04262"/>
<dbReference type="eggNOG" id="ENOG502QQTI">
    <property type="taxonomic scope" value="Eukaryota"/>
</dbReference>
<dbReference type="HOGENOM" id="CLU_007201_2_0_1"/>
<dbReference type="InParanoid" id="A4D9U3"/>
<dbReference type="OMA" id="IWAEAST"/>
<dbReference type="OrthoDB" id="2262349at2759"/>
<dbReference type="Proteomes" id="UP000002530">
    <property type="component" value="Chromosome 2"/>
</dbReference>
<dbReference type="GO" id="GO:0005634">
    <property type="term" value="C:nucleus"/>
    <property type="evidence" value="ECO:0000318"/>
    <property type="project" value="GO_Central"/>
</dbReference>
<dbReference type="GO" id="GO:0003677">
    <property type="term" value="F:DNA binding"/>
    <property type="evidence" value="ECO:0007669"/>
    <property type="project" value="UniProtKB-KW"/>
</dbReference>
<dbReference type="GO" id="GO:0000981">
    <property type="term" value="F:DNA-binding transcription factor activity, RNA polymerase II-specific"/>
    <property type="evidence" value="ECO:0000318"/>
    <property type="project" value="GO_Central"/>
</dbReference>
<dbReference type="GO" id="GO:0008270">
    <property type="term" value="F:zinc ion binding"/>
    <property type="evidence" value="ECO:0007669"/>
    <property type="project" value="InterPro"/>
</dbReference>
<dbReference type="GO" id="GO:0009074">
    <property type="term" value="P:aromatic amino acid family catabolic process"/>
    <property type="evidence" value="ECO:0000318"/>
    <property type="project" value="GO_Central"/>
</dbReference>
<dbReference type="GO" id="GO:0045944">
    <property type="term" value="P:positive regulation of transcription by RNA polymerase II"/>
    <property type="evidence" value="ECO:0000318"/>
    <property type="project" value="GO_Central"/>
</dbReference>
<dbReference type="CDD" id="cd12148">
    <property type="entry name" value="fungal_TF_MHR"/>
    <property type="match status" value="1"/>
</dbReference>
<dbReference type="CDD" id="cd00067">
    <property type="entry name" value="GAL4"/>
    <property type="match status" value="1"/>
</dbReference>
<dbReference type="FunFam" id="4.10.240.10:FF:000032">
    <property type="entry name" value="Related to ARO80-positive transcription regulator of ARO9 and ARO10"/>
    <property type="match status" value="1"/>
</dbReference>
<dbReference type="Gene3D" id="4.10.240.10">
    <property type="entry name" value="Zn(2)-C6 fungal-type DNA-binding domain"/>
    <property type="match status" value="1"/>
</dbReference>
<dbReference type="InterPro" id="IPR052780">
    <property type="entry name" value="AAA_Catabolism_Regulators"/>
</dbReference>
<dbReference type="InterPro" id="IPR036864">
    <property type="entry name" value="Zn2-C6_fun-type_DNA-bd_sf"/>
</dbReference>
<dbReference type="InterPro" id="IPR001138">
    <property type="entry name" value="Zn2Cys6_DnaBD"/>
</dbReference>
<dbReference type="PANTHER" id="PTHR31644">
    <property type="entry name" value="TRANSCRIPTIONAL ACTIVATOR ARO80-RELATED"/>
    <property type="match status" value="1"/>
</dbReference>
<dbReference type="PANTHER" id="PTHR31644:SF3">
    <property type="entry name" value="ZN(II)2CYS6 TRANSCRIPTION FACTOR (EUROFUNG)"/>
    <property type="match status" value="1"/>
</dbReference>
<dbReference type="Pfam" id="PF00172">
    <property type="entry name" value="Zn_clus"/>
    <property type="match status" value="1"/>
</dbReference>
<dbReference type="SMART" id="SM00066">
    <property type="entry name" value="GAL4"/>
    <property type="match status" value="1"/>
</dbReference>
<dbReference type="SUPFAM" id="SSF57701">
    <property type="entry name" value="Zn2/Cys6 DNA-binding domain"/>
    <property type="match status" value="1"/>
</dbReference>
<dbReference type="PROSITE" id="PS50048">
    <property type="entry name" value="ZN2_CY6_FUNGAL_2"/>
    <property type="match status" value="1"/>
</dbReference>
<comment type="function">
    <text evidence="3 4">Transcription factor; part of the L-tyrosine degradation gene cluster that mediates the biosynthesis of the brownish pigment pyomelanin as an alternative melanin (PubMed:19028908, PubMed:22046314). Acts as a transcriptional activator for the genes of the tyrosine degradation cluster (PubMed:22046314).</text>
</comment>
<comment type="subcellular location">
    <subcellularLocation>
        <location evidence="4">Nucleus</location>
    </subcellularLocation>
</comment>
<comment type="induction">
    <text evidence="4">Expression is induced by L-tyrosine.</text>
</comment>
<comment type="disruption phenotype">
    <text evidence="3 4">Abolishes the expression of all cluster genes (PubMed:22046314). Impairs growth on L-tyrosine as the sole carbon source and affects homogentisic acid and pyomelanin formation (PubMed:19028908).</text>
</comment>
<feature type="chain" id="PRO_0000453189" description="Transcription factor hmgR">
    <location>
        <begin position="1"/>
        <end position="748"/>
    </location>
</feature>
<feature type="DNA-binding region" description="Zn(2)-C6 fungal-type" evidence="1">
    <location>
        <begin position="24"/>
        <end position="59"/>
    </location>
</feature>
<feature type="region of interest" description="Disordered" evidence="2">
    <location>
        <begin position="108"/>
        <end position="142"/>
    </location>
</feature>
<feature type="region of interest" description="Disordered" evidence="2">
    <location>
        <begin position="661"/>
        <end position="683"/>
    </location>
</feature>
<proteinExistence type="evidence at transcript level"/>
<keyword id="KW-0238">DNA-binding</keyword>
<keyword id="KW-0539">Nucleus</keyword>
<keyword id="KW-1185">Reference proteome</keyword>
<keyword id="KW-0804">Transcription</keyword>
<keyword id="KW-0805">Transcription regulation</keyword>
<gene>
    <name evidence="5" type="primary">hmgR</name>
    <name type="ORF">AFUA_2G04262</name>
</gene>
<reference key="1">
    <citation type="journal article" date="2005" name="Nature">
        <title>Genomic sequence of the pathogenic and allergenic filamentous fungus Aspergillus fumigatus.</title>
        <authorList>
            <person name="Nierman W.C."/>
            <person name="Pain A."/>
            <person name="Anderson M.J."/>
            <person name="Wortman J.R."/>
            <person name="Kim H.S."/>
            <person name="Arroyo J."/>
            <person name="Berriman M."/>
            <person name="Abe K."/>
            <person name="Archer D.B."/>
            <person name="Bermejo C."/>
            <person name="Bennett J.W."/>
            <person name="Bowyer P."/>
            <person name="Chen D."/>
            <person name="Collins M."/>
            <person name="Coulsen R."/>
            <person name="Davies R."/>
            <person name="Dyer P.S."/>
            <person name="Farman M.L."/>
            <person name="Fedorova N."/>
            <person name="Fedorova N.D."/>
            <person name="Feldblyum T.V."/>
            <person name="Fischer R."/>
            <person name="Fosker N."/>
            <person name="Fraser A."/>
            <person name="Garcia J.L."/>
            <person name="Garcia M.J."/>
            <person name="Goble A."/>
            <person name="Goldman G.H."/>
            <person name="Gomi K."/>
            <person name="Griffith-Jones S."/>
            <person name="Gwilliam R."/>
            <person name="Haas B.J."/>
            <person name="Haas H."/>
            <person name="Harris D.E."/>
            <person name="Horiuchi H."/>
            <person name="Huang J."/>
            <person name="Humphray S."/>
            <person name="Jimenez J."/>
            <person name="Keller N."/>
            <person name="Khouri H."/>
            <person name="Kitamoto K."/>
            <person name="Kobayashi T."/>
            <person name="Konzack S."/>
            <person name="Kulkarni R."/>
            <person name="Kumagai T."/>
            <person name="Lafton A."/>
            <person name="Latge J.-P."/>
            <person name="Li W."/>
            <person name="Lord A."/>
            <person name="Lu C."/>
            <person name="Majoros W.H."/>
            <person name="May G.S."/>
            <person name="Miller B.L."/>
            <person name="Mohamoud Y."/>
            <person name="Molina M."/>
            <person name="Monod M."/>
            <person name="Mouyna I."/>
            <person name="Mulligan S."/>
            <person name="Murphy L.D."/>
            <person name="O'Neil S."/>
            <person name="Paulsen I."/>
            <person name="Penalva M.A."/>
            <person name="Pertea M."/>
            <person name="Price C."/>
            <person name="Pritchard B.L."/>
            <person name="Quail M.A."/>
            <person name="Rabbinowitsch E."/>
            <person name="Rawlins N."/>
            <person name="Rajandream M.A."/>
            <person name="Reichard U."/>
            <person name="Renauld H."/>
            <person name="Robson G.D."/>
            <person name="Rodriguez de Cordoba S."/>
            <person name="Rodriguez-Pena J.M."/>
            <person name="Ronning C.M."/>
            <person name="Rutter S."/>
            <person name="Salzberg S.L."/>
            <person name="Sanchez M."/>
            <person name="Sanchez-Ferrero J.C."/>
            <person name="Saunders D."/>
            <person name="Seeger K."/>
            <person name="Squares R."/>
            <person name="Squares S."/>
            <person name="Takeuchi M."/>
            <person name="Tekaia F."/>
            <person name="Turner G."/>
            <person name="Vazquez de Aldana C.R."/>
            <person name="Weidman J."/>
            <person name="White O."/>
            <person name="Woodward J.R."/>
            <person name="Yu J.-H."/>
            <person name="Fraser C.M."/>
            <person name="Galagan J.E."/>
            <person name="Asai K."/>
            <person name="Machida M."/>
            <person name="Hall N."/>
            <person name="Barrell B.G."/>
            <person name="Denning D.W."/>
        </authorList>
    </citation>
    <scope>NUCLEOTIDE SEQUENCE [LARGE SCALE GENOMIC DNA]</scope>
    <source>
        <strain>ATCC MYA-4609 / CBS 101355 / FGSC A1100 / Af293</strain>
    </source>
</reference>
<reference key="2">
    <citation type="journal article" date="2009" name="Appl. Environ. Microbiol.">
        <title>Production of pyomelanin, a second type of melanin, via the tyrosine degradation pathway in Aspergillus fumigatus.</title>
        <authorList>
            <person name="Schmaler-Ripcke J."/>
            <person name="Sugareva V."/>
            <person name="Gebhardt P."/>
            <person name="Winkler R."/>
            <person name="Kniemeyer O."/>
            <person name="Heinekamp T."/>
            <person name="Brakhage A.A."/>
        </authorList>
    </citation>
    <scope>FUNCTION</scope>
</reference>
<reference key="3">
    <citation type="journal article" date="2011" name="PLoS ONE">
        <title>Pyomelanin formation in Aspergillus fumigatus requires HmgX and the transcriptional activator HmgR but is dispensable for virulence.</title>
        <authorList>
            <person name="Keller S."/>
            <person name="Macheleidt J."/>
            <person name="Scherlach K."/>
            <person name="Schmaler-Ripcke J."/>
            <person name="Jacobsen I.D."/>
            <person name="Heinekamp T."/>
            <person name="Brakhage A.A."/>
        </authorList>
    </citation>
    <scope>FUNCTION</scope>
    <scope>DISRUPTION PHENOTYPE</scope>
    <scope>INDUCTION</scope>
    <scope>SUBCELLULAR LOCATION</scope>
</reference>
<sequence length="748" mass="85402">MEIRRPSRHGNHPDRTYQRTYKACISCRQRKAKCDLGTGPDGLPLGPPCAKCRREQKPCLFDEKRAWERVKKRGTQSTSNLANSMMRTVVSSGNDALNILFEAANAQSQEDSMIESDSLPETEQHRSGHPVTSEGSSNQIDLTVPPDVLEKAMRPVELSHVSKDVLSTWEACRFVRMGWFTAREAVTFIDLFFKNMSILSPVLTDFYADHKNHRWLIAHDPVLCCTILMISSRYHVLPGVGGQSRNFFIHHRLWQHCQQLVTRLIFGQELSSQPKIRNIGTIEALLLMSDWHPRSLHFPPESDGWDSDLVTIDLESTEYGDDGSNSSAKRWAKDMSEPAKRSDQMSWMLLGSALSLAHELGIYETGDKARDAFVAYERFMTKDQMRLRRQRAQRLLYVYINQLAWRIGCVSLMPQGLSHSILNRQTSRELSQYGEEWLTFMDSWMDLTKLAKSVTDMFFPSVTFARQQLQSGRYIDLLDHFRPLLDKWKERYLQPQLHDKPFYDDIFIEYHFVRVYTHSVGMQAVVERAIADGNADEEEVRPMNIDPIDYEYIQEVIDGCCQILEKVTQLADIGALRFSPVRIFVRITSASIFLMKALSLGARQAKLRESLDVLERTIQALRSNALDDIHLSTRYATLLETHVSRLRRHLVASCKSLKRRRESTTRHSMVPPSYASATSDEHAPLITNPPVPQNMSDMGFTPSLNDIAADDWLSLPFDPSMAPFSISSGGQFPAYEGGGLNFLWNLPS</sequence>
<name>HMGR_ASPFU</name>
<accession>A4D9U3</accession>
<evidence type="ECO:0000255" key="1">
    <source>
        <dbReference type="PROSITE-ProRule" id="PRU00227"/>
    </source>
</evidence>
<evidence type="ECO:0000256" key="2">
    <source>
        <dbReference type="SAM" id="MobiDB-lite"/>
    </source>
</evidence>
<evidence type="ECO:0000269" key="3">
    <source>
    </source>
</evidence>
<evidence type="ECO:0000269" key="4">
    <source>
    </source>
</evidence>
<evidence type="ECO:0000303" key="5">
    <source>
    </source>
</evidence>
<protein>
    <recommendedName>
        <fullName evidence="5">Transcription factor hmgR</fullName>
    </recommendedName>
    <alternativeName>
        <fullName evidence="5">L-tyrosine degradation gene cluster protein hmgR</fullName>
    </alternativeName>
    <alternativeName>
        <fullName evidence="5">Pyomelanin biosynthesis cluster protein hmgR</fullName>
    </alternativeName>
</protein>